<sequence>MMLNLTANPSAGTTVTVDLPADHPALNQFKTAFPGFEVVASNRSSNDHAAARAFSHLATKWIERDIDGRQVIVADIGSAPARRVGAPDNVTYHSVCPRKCAEDPERLASYARKLVRAVEKGDGHLVSDRITDLKDVLENPDTSLETTSICLNDDVSCKVKADIAVYQDVYAVDAPSTIYAQADKGTRVVYWIGFEPFVFHTDAMAGSFPLYDANWSDSAVLAAKNLPLCYSGLSEDSIKWRFRFRDKPLVPSGEIHYSVGSTHYVEDRDKLKSWHLPSTFHFVAPNKYTCRCDTVVSCGGYVVKKITICEGIVGRPANEELATSYHRDGVVVTKFSDTINHEQVSFPVVTYIPAVICDQMTAMTADPVKYPDVVKLLVGLNQRIVVNGTTVRNVNSMDNSLIPVFARALCSWADEARRDMEDEQDMYGVTSVTTWICICRAYDKRQQHTFYRRPKQSSGIYVPAKFTGSLRASLSATYLNLPLKQLLLNTLKRAIKPGDQALADETEARAHDAAEVHELTEEEGRQQAANPSYIADVLGQDDEEEVDDGMSNVDLGEEDGVGSTIIDCQRGTVKVITAFGDNTMGEYLVLSPVTVLRTRKLAVLLGPLAEEVMQYVHKGRTGRYAIEKNNLKVLIPTGVSLKTAHFQALTESATLTYNDYLFTCRTLDQLATRGSAKNTDEVYYKLVDAAKAKDEYVYELSSKQCVKKEDATGTVLQGDICNPPYHQFAFEALRKRPAHTHDVHTIGIYGVPGAGKTAIITTEVTTRDLVASGKKENCEDIKRCVLERRGLKIAARTVDSLLYGAYRGAVDTLYVDEAYACHSGTLLALIAAVRPTGKVVLCGDPKQVGCVNQLQMRMHYNHEISDRVLRKNISRRCTHTLTAIVSNLNYEGRMKTTNPCKKPVLIDTTGSTKPDKEALVLTCFRGWVKDLKILYPHNELMTAAASQGLTREKVYAVRCRVTSNPLYEPTSEHITVLLTRTNDELVWKTLPNDPLIPILSKPPKGDYSATMEDWEDEHNGILAALREACVPRMNFAHGKRNTCWAVTSSRVLHEAGVLITPEDFNRIFPAFREDKPHSALAALDAVAALVWGLDTSSGILSGKGSFMRLENSHWSNSNRGYEYGLNLDALEGYEIANPRMIKALKQRRGRECYDIETGKLVPMDPGRVQVPINRVVPHVLVDTSAAAKPGFLENRLSVDRWDQVHSFKTRAAVKFAELTKRVSYNSVLDLGAARGGVTDYCVKKGKTVTCVSEQWDSKPRGAVVITADINGPLNNLGIFDLVFCDAAGPRRYHHYAQCEDHARRSTSACKHGVERTAKGGVFIVKAYGMADRRTERAVECTARYFKSVSVEKPVSSRITNVEVFFKFSGRCRPHARSIAHLGPQLTDIYARTRKAYKMLARGSVADKVKVAEILNSMVGAAPGYRVLNKNIITAEEEVLVNAANSNGRPGDGVCGALYGAFGDAFPNGAIGAGNAVLVRGLEATIIHAAGADFREVDEETGARQLRAAYRAAATLVTANGITSAAIPLLSTHIFSNGRNRLEQSFGALVEAFDTTECDVTIYCLANNMAARIQQLIDDHAREEFDEEVVVEEEEEHEANAMCDTETLSSFGDETVWVPKHSTLAGRPGYSATYGDRRSLFVGTKFHRAAVAMSSIEAAWPRTKEANAKLIEYIRGQHLVDVLKSCPVNDIPVGRPPSSLPCGCIYAMTPERVTVLKQRPQEGFVVCSAFKLPLTNIQDVTKVECTVRAPAEEPRPVRYLQERRPVQAAARQPRPAIVAASVAGTATSRRTPAPGSVQVRLLPPRDGTVSRSSRTSSQSSVTSSAGPIMPVPRRAPVAPAASLAGSVHSHSVRSAPAILRAASTGARSVRSVQSGLTGHRDDAVSVAGSVRQPSGPPSSVSTPAAPRGLTREQFGAVRARARRDLELEGSEHGSQASFRSGSLVVGSTASSYSQRPDDQDTGSEPSGRGAAVRTRRRGQRDGPGGYIFSSDQGTAHLSQHNTQTNNTTEVLMRTSVLPSNDHGTPDLLAEMKKRLAYQMRPTQKNKSRYLSAKVHNMKHKIVQCLQRGAGHYLREQHALPLWKNTFPKPRYSDACVVKFESVNTAIVAANMFIGCNYPTLSSFGVTDKYDAYLDMVDGLNCNLDTVTFEPAKVRSLPKKSKYNQPLIQSQVPGPMASTLQSILMAATKRNCNVTQMRELPTMDSAAMNVEAFKKFACKDTDLWTEFAEKPVRLSPGQIEEYVFHLQGAKANVMHSRVEAACPDLSEVAMDRFTLDMKRDVKVTPGTKHVEERPKVQVIQAADPMATAYLCAIHRELVRRLKAVLKPSIHVLFDMSSEDFDAIVGHGMKLGDKVLETDISSFDKSQDQAMAVTALMLLEDLGVEEDLLTLIEASFGDITSVHLPTGTRFQFGSMMKSGLFLTLFVNTLLNITIAARVLREQLADTRCAAFIGDDNVITGVVSDDMMVARCASWLNMEVKIMEMEIGDRSPYFCGGFLLLDTVTGTVSRVSDPVKRLMKMGKPALNDPETDVDRCRALREEVESWYRVGIQWPLQVAAATRYGVNHLPLATMAMATLAQDLRSYLGARGEYVSLYA</sequence>
<proteinExistence type="inferred from homology"/>
<feature type="chain" id="PRO_0000308406" description="Polyprotein P1234">
    <location>
        <begin position="1"/>
        <end position="2593"/>
    </location>
</feature>
<feature type="chain" id="PRO_0000228791" description="Polyprotein P123">
    <location>
        <begin position="1"/>
        <end position="1984"/>
    </location>
</feature>
<feature type="chain" id="PRO_0000228792" description="mRNA-capping enzyme nsP1">
    <location>
        <begin position="1"/>
        <end position="561"/>
    </location>
</feature>
<feature type="chain" id="PRO_0000228793" description="Protease nsP2">
    <location>
        <begin position="562"/>
        <end position="1420"/>
    </location>
</feature>
<feature type="chain" id="PRO_0000228794" description="Non-structural protein 3">
    <location>
        <begin position="1421"/>
        <end position="1984"/>
    </location>
</feature>
<feature type="chain" id="PRO_0000228795" description="RNA-directed RNA polymerase nsP4">
    <location>
        <begin position="1985"/>
        <end position="2593"/>
    </location>
</feature>
<feature type="domain" description="Alphavirus-like MT" evidence="11">
    <location>
        <begin position="39"/>
        <end position="275"/>
    </location>
</feature>
<feature type="domain" description="(+)RNA virus helicase ATP-binding" evidence="10">
    <location>
        <begin position="718"/>
        <end position="871"/>
    </location>
</feature>
<feature type="domain" description="(+)RNA virus helicase C-terminal" evidence="10">
    <location>
        <begin position="872"/>
        <end position="1020"/>
    </location>
</feature>
<feature type="domain" description="Peptidase C9" evidence="9">
    <location>
        <begin position="1034"/>
        <end position="1392"/>
    </location>
</feature>
<feature type="domain" description="Macro" evidence="7">
    <location>
        <begin position="1421"/>
        <end position="1580"/>
    </location>
</feature>
<feature type="domain" description="RdRp catalytic" evidence="8">
    <location>
        <begin position="2349"/>
        <end position="2464"/>
    </location>
</feature>
<feature type="region of interest" description="nsP1 membrane-binding" evidence="3">
    <location>
        <begin position="260"/>
        <end position="279"/>
    </location>
</feature>
<feature type="region of interest" description="Nucleolus localization signal" evidence="3">
    <location>
        <begin position="1034"/>
        <end position="1054"/>
    </location>
</feature>
<feature type="region of interest" description="Disordered" evidence="12">
    <location>
        <begin position="1781"/>
        <end position="1832"/>
    </location>
</feature>
<feature type="region of interest" description="Disordered" evidence="12">
    <location>
        <begin position="1860"/>
        <end position="1912"/>
    </location>
</feature>
<feature type="region of interest" description="Disordered" evidence="12">
    <location>
        <begin position="1926"/>
        <end position="1985"/>
    </location>
</feature>
<feature type="short sequence motif" description="Nuclear export signal" evidence="4">
    <location>
        <begin position="1088"/>
        <end position="1097"/>
    </location>
</feature>
<feature type="short sequence motif" description="Nuclear localization signal" evidence="3">
    <location>
        <begin position="1218"/>
        <end position="1222"/>
    </location>
</feature>
<feature type="compositionally biased region" description="Low complexity" evidence="12">
    <location>
        <begin position="1808"/>
        <end position="1823"/>
    </location>
</feature>
<feature type="compositionally biased region" description="Polar residues" evidence="12">
    <location>
        <begin position="1931"/>
        <end position="1953"/>
    </location>
</feature>
<feature type="active site" description="For cysteine protease nsP2 activity" evidence="9">
    <location>
        <position position="1043"/>
    </location>
</feature>
<feature type="active site" description="For cysteine protease nsP2 activity" evidence="9">
    <location>
        <position position="1113"/>
    </location>
</feature>
<feature type="binding site" evidence="10">
    <location>
        <begin position="750"/>
        <end position="757"/>
    </location>
    <ligand>
        <name>a ribonucleoside 5'-triphosphate</name>
        <dbReference type="ChEBI" id="CHEBI:61557"/>
    </ligand>
</feature>
<feature type="binding site" evidence="6">
    <location>
        <position position="1444"/>
    </location>
    <ligand>
        <name>ADP-D-ribose</name>
        <dbReference type="ChEBI" id="CHEBI:57967"/>
    </ligand>
</feature>
<feature type="binding site" evidence="6">
    <location>
        <position position="1452"/>
    </location>
    <ligand>
        <name>ADP-D-ribose</name>
        <dbReference type="ChEBI" id="CHEBI:57967"/>
    </ligand>
</feature>
<feature type="binding site" evidence="5">
    <location>
        <position position="1533"/>
    </location>
    <ligand>
        <name>ADP-D-ribose</name>
        <dbReference type="ChEBI" id="CHEBI:57967"/>
    </ligand>
</feature>
<feature type="binding site" evidence="5">
    <location>
        <position position="1534"/>
    </location>
    <ligand>
        <name>ADP-D-ribose</name>
        <dbReference type="ChEBI" id="CHEBI:57967"/>
    </ligand>
</feature>
<feature type="binding site" evidence="2">
    <location>
        <position position="1701"/>
    </location>
    <ligand>
        <name>Zn(2+)</name>
        <dbReference type="ChEBI" id="CHEBI:29105"/>
    </ligand>
</feature>
<feature type="binding site" evidence="2">
    <location>
        <position position="1703"/>
    </location>
    <ligand>
        <name>Zn(2+)</name>
        <dbReference type="ChEBI" id="CHEBI:29105"/>
    </ligand>
</feature>
<feature type="binding site" evidence="2">
    <location>
        <position position="1726"/>
    </location>
    <ligand>
        <name>Zn(2+)</name>
        <dbReference type="ChEBI" id="CHEBI:29105"/>
    </ligand>
</feature>
<feature type="binding site" evidence="2">
    <location>
        <position position="1744"/>
    </location>
    <ligand>
        <name>Zn(2+)</name>
        <dbReference type="ChEBI" id="CHEBI:29105"/>
    </ligand>
</feature>
<feature type="site" description="Involved in the phosphoramide link with 7-methyl-GMP" evidence="4">
    <location>
        <position position="48"/>
    </location>
</feature>
<feature type="site" description="Cleavage; by protease nsP2" evidence="2">
    <location>
        <begin position="561"/>
        <end position="562"/>
    </location>
</feature>
<feature type="site" description="Cleavage; by protease nsP2" evidence="2">
    <location>
        <begin position="1420"/>
        <end position="1421"/>
    </location>
</feature>
<feature type="site" description="Cleavage; by protease nsP2" evidence="6">
    <location>
        <begin position="1984"/>
        <end position="1985"/>
    </location>
</feature>
<feature type="lipid moiety-binding region" description="S-palmitoyl cysteine; by host" evidence="6">
    <location>
        <position position="437"/>
    </location>
</feature>
<feature type="lipid moiety-binding region" description="S-palmitoyl cysteine; by host" evidence="6">
    <location>
        <position position="439"/>
    </location>
</feature>
<protein>
    <recommendedName>
        <fullName>Polyprotein P1234</fullName>
        <shortName>P1234</shortName>
    </recommendedName>
    <alternativeName>
        <fullName>Non-structural polyprotein</fullName>
    </alternativeName>
    <component>
        <recommendedName>
            <fullName>Polyprotein P123</fullName>
            <shortName>P123</shortName>
        </recommendedName>
    </component>
    <component>
        <recommendedName>
            <fullName>mRNA-capping enzyme nsP1</fullName>
            <ecNumber evidence="4">2.1.1.-</ecNumber>
            <ecNumber evidence="4">2.7.7.-</ecNumber>
        </recommendedName>
        <alternativeName>
            <fullName>Non-structural protein 1</fullName>
        </alternativeName>
    </component>
    <component>
        <recommendedName>
            <fullName>Protease nsP2</fullName>
            <ecNumber evidence="6">3.4.22.-</ecNumber>
            <ecNumber evidence="6">3.6.1.15</ecNumber>
            <ecNumber evidence="3">3.6.1.74</ecNumber>
            <ecNumber evidence="6">3.6.4.13</ecNumber>
        </recommendedName>
        <alternativeName>
            <fullName>Non-structural protein 2</fullName>
            <shortName>nsP2</shortName>
        </alternativeName>
    </component>
    <component>
        <recommendedName>
            <fullName>Non-structural protein 3</fullName>
            <shortName>nsP3</shortName>
            <ecNumber evidence="6">3.1.3.84</ecNumber>
        </recommendedName>
    </component>
    <component>
        <recommendedName>
            <fullName>RNA-directed RNA polymerase nsP4</fullName>
            <ecNumber evidence="2">2.7.7.19</ecNumber>
            <ecNumber evidence="8">2.7.7.48</ecNumber>
        </recommendedName>
        <alternativeName>
            <fullName>Non-structural protein 4</fullName>
            <shortName>nsP4</shortName>
        </alternativeName>
    </component>
</protein>
<dbReference type="EC" id="2.1.1.-" evidence="4"/>
<dbReference type="EC" id="2.7.7.-" evidence="4"/>
<dbReference type="EC" id="3.4.22.-" evidence="6"/>
<dbReference type="EC" id="3.6.1.15" evidence="6"/>
<dbReference type="EC" id="3.6.1.74" evidence="3"/>
<dbReference type="EC" id="3.6.4.13" evidence="6"/>
<dbReference type="EC" id="3.1.3.84" evidence="6"/>
<dbReference type="EC" id="2.7.7.19" evidence="2"/>
<dbReference type="EC" id="2.7.7.48" evidence="8"/>
<dbReference type="EMBL" id="AJ316246">
    <property type="protein sequence ID" value="CAC87660.1"/>
    <property type="molecule type" value="Genomic_RNA"/>
</dbReference>
<dbReference type="RefSeq" id="NP_598184.1">
    <property type="nucleotide sequence ID" value="NC_003433.1"/>
</dbReference>
<dbReference type="SMR" id="Q8QL53"/>
<dbReference type="GeneID" id="1729819"/>
<dbReference type="KEGG" id="vg:1729819"/>
<dbReference type="Proteomes" id="UP000006568">
    <property type="component" value="Segment"/>
</dbReference>
<dbReference type="GO" id="GO:0044162">
    <property type="term" value="C:host cell cytoplasmic vesicle membrane"/>
    <property type="evidence" value="ECO:0007669"/>
    <property type="project" value="UniProtKB-SubCell"/>
</dbReference>
<dbReference type="GO" id="GO:0044176">
    <property type="term" value="C:host cell filopodium"/>
    <property type="evidence" value="ECO:0007669"/>
    <property type="project" value="UniProtKB-SubCell"/>
</dbReference>
<dbReference type="GO" id="GO:0042025">
    <property type="term" value="C:host cell nucleus"/>
    <property type="evidence" value="ECO:0007669"/>
    <property type="project" value="UniProtKB-SubCell"/>
</dbReference>
<dbReference type="GO" id="GO:0020002">
    <property type="term" value="C:host cell plasma membrane"/>
    <property type="evidence" value="ECO:0007669"/>
    <property type="project" value="UniProtKB-SubCell"/>
</dbReference>
<dbReference type="GO" id="GO:0016020">
    <property type="term" value="C:membrane"/>
    <property type="evidence" value="ECO:0007669"/>
    <property type="project" value="UniProtKB-KW"/>
</dbReference>
<dbReference type="GO" id="GO:0005524">
    <property type="term" value="F:ATP binding"/>
    <property type="evidence" value="ECO:0007669"/>
    <property type="project" value="UniProtKB-KW"/>
</dbReference>
<dbReference type="GO" id="GO:0016887">
    <property type="term" value="F:ATP hydrolysis activity"/>
    <property type="evidence" value="ECO:0007669"/>
    <property type="project" value="RHEA"/>
</dbReference>
<dbReference type="GO" id="GO:0008234">
    <property type="term" value="F:cysteine-type peptidase activity"/>
    <property type="evidence" value="ECO:0007669"/>
    <property type="project" value="UniProtKB-KW"/>
</dbReference>
<dbReference type="GO" id="GO:0005525">
    <property type="term" value="F:GTP binding"/>
    <property type="evidence" value="ECO:0007669"/>
    <property type="project" value="UniProtKB-KW"/>
</dbReference>
<dbReference type="GO" id="GO:0046872">
    <property type="term" value="F:metal ion binding"/>
    <property type="evidence" value="ECO:0007669"/>
    <property type="project" value="UniProtKB-KW"/>
</dbReference>
<dbReference type="GO" id="GO:0140818">
    <property type="term" value="F:mRNA 5'-triphosphate monophosphatase activity"/>
    <property type="evidence" value="ECO:0007669"/>
    <property type="project" value="RHEA"/>
</dbReference>
<dbReference type="GO" id="GO:0008174">
    <property type="term" value="F:mRNA methyltransferase activity"/>
    <property type="evidence" value="ECO:0007669"/>
    <property type="project" value="InterPro"/>
</dbReference>
<dbReference type="GO" id="GO:1990817">
    <property type="term" value="F:poly(A) RNA polymerase activity"/>
    <property type="evidence" value="ECO:0007669"/>
    <property type="project" value="UniProtKB-EC"/>
</dbReference>
<dbReference type="GO" id="GO:0004651">
    <property type="term" value="F:polynucleotide 5'-phosphatase activity"/>
    <property type="evidence" value="ECO:0007669"/>
    <property type="project" value="UniProtKB-EC"/>
</dbReference>
<dbReference type="GO" id="GO:0003723">
    <property type="term" value="F:RNA binding"/>
    <property type="evidence" value="ECO:0007669"/>
    <property type="project" value="UniProtKB-KW"/>
</dbReference>
<dbReference type="GO" id="GO:0003724">
    <property type="term" value="F:RNA helicase activity"/>
    <property type="evidence" value="ECO:0007669"/>
    <property type="project" value="UniProtKB-EC"/>
</dbReference>
<dbReference type="GO" id="GO:0003968">
    <property type="term" value="F:RNA-directed RNA polymerase activity"/>
    <property type="evidence" value="ECO:0007669"/>
    <property type="project" value="UniProtKB-KW"/>
</dbReference>
<dbReference type="GO" id="GO:0006370">
    <property type="term" value="P:7-methylguanosine mRNA capping"/>
    <property type="evidence" value="ECO:0007669"/>
    <property type="project" value="UniProtKB-KW"/>
</dbReference>
<dbReference type="GO" id="GO:0006351">
    <property type="term" value="P:DNA-templated transcription"/>
    <property type="evidence" value="ECO:0007669"/>
    <property type="project" value="InterPro"/>
</dbReference>
<dbReference type="GO" id="GO:0032259">
    <property type="term" value="P:methylation"/>
    <property type="evidence" value="ECO:0007669"/>
    <property type="project" value="UniProtKB-KW"/>
</dbReference>
<dbReference type="GO" id="GO:0016556">
    <property type="term" value="P:mRNA modification"/>
    <property type="evidence" value="ECO:0007669"/>
    <property type="project" value="InterPro"/>
</dbReference>
<dbReference type="GO" id="GO:0006508">
    <property type="term" value="P:proteolysis"/>
    <property type="evidence" value="ECO:0007669"/>
    <property type="project" value="UniProtKB-KW"/>
</dbReference>
<dbReference type="GO" id="GO:0039657">
    <property type="term" value="P:symbiont-mediated suppression of host gene expression"/>
    <property type="evidence" value="ECO:0007669"/>
    <property type="project" value="UniProtKB-KW"/>
</dbReference>
<dbReference type="GO" id="GO:0039523">
    <property type="term" value="P:symbiont-mediated suppression of host mRNA transcription via inhibition of RNA polymerase II activity"/>
    <property type="evidence" value="ECO:0007669"/>
    <property type="project" value="UniProtKB-KW"/>
</dbReference>
<dbReference type="GO" id="GO:0039694">
    <property type="term" value="P:viral RNA genome replication"/>
    <property type="evidence" value="ECO:0007669"/>
    <property type="project" value="InterPro"/>
</dbReference>
<dbReference type="CDD" id="cd21557">
    <property type="entry name" value="Macro_X_Nsp3-like"/>
    <property type="match status" value="1"/>
</dbReference>
<dbReference type="FunFam" id="3.40.220.10:FF:000015">
    <property type="entry name" value="Polyprotein P1234"/>
    <property type="match status" value="1"/>
</dbReference>
<dbReference type="Gene3D" id="3.90.70.110">
    <property type="entry name" value="Alphavirus nsP2 protease domain"/>
    <property type="match status" value="1"/>
</dbReference>
<dbReference type="Gene3D" id="3.40.220.10">
    <property type="entry name" value="Leucine Aminopeptidase, subunit E, domain 1"/>
    <property type="match status" value="1"/>
</dbReference>
<dbReference type="Gene3D" id="3.40.50.300">
    <property type="entry name" value="P-loop containing nucleotide triphosphate hydrolases"/>
    <property type="match status" value="2"/>
</dbReference>
<dbReference type="Gene3D" id="3.40.50.150">
    <property type="entry name" value="Vaccinia Virus protein VP39"/>
    <property type="match status" value="1"/>
</dbReference>
<dbReference type="InterPro" id="IPR027351">
    <property type="entry name" value="(+)RNA_virus_helicase_core_dom"/>
</dbReference>
<dbReference type="InterPro" id="IPR002588">
    <property type="entry name" value="Alphavirus-like_MT_dom"/>
</dbReference>
<dbReference type="InterPro" id="IPR002620">
    <property type="entry name" value="Alphavirus_nsp2pro"/>
</dbReference>
<dbReference type="InterPro" id="IPR044936">
    <property type="entry name" value="Alphavirus_nsp2pro_sf"/>
</dbReference>
<dbReference type="InterPro" id="IPR043502">
    <property type="entry name" value="DNA/RNA_pol_sf"/>
</dbReference>
<dbReference type="InterPro" id="IPR002589">
    <property type="entry name" value="Macro_dom"/>
</dbReference>
<dbReference type="InterPro" id="IPR043472">
    <property type="entry name" value="Macro_dom-like"/>
</dbReference>
<dbReference type="InterPro" id="IPR044371">
    <property type="entry name" value="Macro_X_NSP3-like"/>
</dbReference>
<dbReference type="InterPro" id="IPR048891">
    <property type="entry name" value="nsP3_ZBD"/>
</dbReference>
<dbReference type="InterPro" id="IPR027417">
    <property type="entry name" value="P-loop_NTPase"/>
</dbReference>
<dbReference type="InterPro" id="IPR001788">
    <property type="entry name" value="RNA-dep_RNA_pol_alsuvir"/>
</dbReference>
<dbReference type="InterPro" id="IPR007094">
    <property type="entry name" value="RNA-dir_pol_PSvirus"/>
</dbReference>
<dbReference type="InterPro" id="IPR002877">
    <property type="entry name" value="RNA_MeTrfase_FtsJ_dom"/>
</dbReference>
<dbReference type="InterPro" id="IPR029063">
    <property type="entry name" value="SAM-dependent_MTases_sf"/>
</dbReference>
<dbReference type="InterPro" id="IPR049329">
    <property type="entry name" value="ToMV_Hel_N"/>
</dbReference>
<dbReference type="Pfam" id="PF01728">
    <property type="entry name" value="FtsJ"/>
    <property type="match status" value="1"/>
</dbReference>
<dbReference type="Pfam" id="PF01661">
    <property type="entry name" value="Macro"/>
    <property type="match status" value="1"/>
</dbReference>
<dbReference type="Pfam" id="PF20852">
    <property type="entry name" value="nsP3_ZBD"/>
    <property type="match status" value="1"/>
</dbReference>
<dbReference type="Pfam" id="PF01707">
    <property type="entry name" value="Peptidase_C9"/>
    <property type="match status" value="1"/>
</dbReference>
<dbReference type="Pfam" id="PF00978">
    <property type="entry name" value="RdRP_2"/>
    <property type="match status" value="1"/>
</dbReference>
<dbReference type="Pfam" id="PF20896">
    <property type="entry name" value="ToMV_Hel_N"/>
    <property type="match status" value="1"/>
</dbReference>
<dbReference type="Pfam" id="PF01443">
    <property type="entry name" value="Viral_helicase1"/>
    <property type="match status" value="1"/>
</dbReference>
<dbReference type="Pfam" id="PF01660">
    <property type="entry name" value="Vmethyltransf"/>
    <property type="match status" value="1"/>
</dbReference>
<dbReference type="SMART" id="SM00506">
    <property type="entry name" value="A1pp"/>
    <property type="match status" value="1"/>
</dbReference>
<dbReference type="SUPFAM" id="SSF56672">
    <property type="entry name" value="DNA/RNA polymerases"/>
    <property type="match status" value="1"/>
</dbReference>
<dbReference type="SUPFAM" id="SSF52949">
    <property type="entry name" value="Macro domain-like"/>
    <property type="match status" value="1"/>
</dbReference>
<dbReference type="SUPFAM" id="SSF52540">
    <property type="entry name" value="P-loop containing nucleoside triphosphate hydrolases"/>
    <property type="match status" value="1"/>
</dbReference>
<dbReference type="SUPFAM" id="SSF53335">
    <property type="entry name" value="S-adenosyl-L-methionine-dependent methyltransferases"/>
    <property type="match status" value="1"/>
</dbReference>
<dbReference type="PROSITE" id="PS51743">
    <property type="entry name" value="ALPHAVIRUS_MT"/>
    <property type="match status" value="1"/>
</dbReference>
<dbReference type="PROSITE" id="PS51154">
    <property type="entry name" value="MACRO"/>
    <property type="match status" value="1"/>
</dbReference>
<dbReference type="PROSITE" id="PS51520">
    <property type="entry name" value="NSP2PRO"/>
    <property type="match status" value="1"/>
</dbReference>
<dbReference type="PROSITE" id="PS51657">
    <property type="entry name" value="PSRV_HELICASE"/>
    <property type="match status" value="1"/>
</dbReference>
<dbReference type="PROSITE" id="PS50507">
    <property type="entry name" value="RDRP_SSRNA_POS"/>
    <property type="match status" value="1"/>
</dbReference>
<name>POLN_SAV2</name>
<evidence type="ECO:0000250" key="1">
    <source>
        <dbReference type="UniProtKB" id="O90370"/>
    </source>
</evidence>
<evidence type="ECO:0000250" key="2">
    <source>
        <dbReference type="UniProtKB" id="P03317"/>
    </source>
</evidence>
<evidence type="ECO:0000250" key="3">
    <source>
        <dbReference type="UniProtKB" id="P08411"/>
    </source>
</evidence>
<evidence type="ECO:0000250" key="4">
    <source>
        <dbReference type="UniProtKB" id="P27282"/>
    </source>
</evidence>
<evidence type="ECO:0000250" key="5">
    <source>
        <dbReference type="UniProtKB" id="P36328"/>
    </source>
</evidence>
<evidence type="ECO:0000250" key="6">
    <source>
        <dbReference type="UniProtKB" id="Q8JUX6"/>
    </source>
</evidence>
<evidence type="ECO:0000255" key="7">
    <source>
        <dbReference type="PROSITE-ProRule" id="PRU00490"/>
    </source>
</evidence>
<evidence type="ECO:0000255" key="8">
    <source>
        <dbReference type="PROSITE-ProRule" id="PRU00539"/>
    </source>
</evidence>
<evidence type="ECO:0000255" key="9">
    <source>
        <dbReference type="PROSITE-ProRule" id="PRU00853"/>
    </source>
</evidence>
<evidence type="ECO:0000255" key="10">
    <source>
        <dbReference type="PROSITE-ProRule" id="PRU00990"/>
    </source>
</evidence>
<evidence type="ECO:0000255" key="11">
    <source>
        <dbReference type="PROSITE-ProRule" id="PRU01079"/>
    </source>
</evidence>
<evidence type="ECO:0000256" key="12">
    <source>
        <dbReference type="SAM" id="MobiDB-lite"/>
    </source>
</evidence>
<evidence type="ECO:0000269" key="13">
    <source>
    </source>
</evidence>
<evidence type="ECO:0000305" key="14"/>
<keyword id="KW-0067">ATP-binding</keyword>
<keyword id="KW-1262">Eukaryotic host gene expression shutoff by virus</keyword>
<keyword id="KW-1191">Eukaryotic host transcription shutoff by virus</keyword>
<keyword id="KW-0342">GTP-binding</keyword>
<keyword id="KW-0347">Helicase</keyword>
<keyword id="KW-1032">Host cell membrane</keyword>
<keyword id="KW-1034">Host cell projection</keyword>
<keyword id="KW-1035">Host cytoplasm</keyword>
<keyword id="KW-1036">Host cytoplasmic vesicle</keyword>
<keyword id="KW-1190">Host gene expression shutoff by virus</keyword>
<keyword id="KW-1043">Host membrane</keyword>
<keyword id="KW-1048">Host nucleus</keyword>
<keyword id="KW-0945">Host-virus interaction</keyword>
<keyword id="KW-0378">Hydrolase</keyword>
<keyword id="KW-1104">Inhibition of host RNA polymerase II by virus</keyword>
<keyword id="KW-0449">Lipoprotein</keyword>
<keyword id="KW-0472">Membrane</keyword>
<keyword id="KW-0479">Metal-binding</keyword>
<keyword id="KW-0489">Methyltransferase</keyword>
<keyword id="KW-0506">mRNA capping</keyword>
<keyword id="KW-0507">mRNA processing</keyword>
<keyword id="KW-0511">Multifunctional enzyme</keyword>
<keyword id="KW-0547">Nucleotide-binding</keyword>
<keyword id="KW-0548">Nucleotidyltransferase</keyword>
<keyword id="KW-0564">Palmitate</keyword>
<keyword id="KW-0645">Protease</keyword>
<keyword id="KW-1159">RNA suppression of termination</keyword>
<keyword id="KW-0694">RNA-binding</keyword>
<keyword id="KW-0696">RNA-directed RNA polymerase</keyword>
<keyword id="KW-0949">S-adenosyl-L-methionine</keyword>
<keyword id="KW-0788">Thiol protease</keyword>
<keyword id="KW-0808">Transferase</keyword>
<keyword id="KW-0832">Ubl conjugation</keyword>
<keyword id="KW-0693">Viral RNA replication</keyword>
<keyword id="KW-0862">Zinc</keyword>
<accession>Q8QL53</accession>
<organism>
    <name type="scientific">Alphavirus salmon subtype 2</name>
    <name type="common">SAV2</name>
    <name type="synonym">Sleeping disease virus</name>
    <dbReference type="NCBI Taxonomy" id="78540"/>
    <lineage>
        <taxon>Viruses</taxon>
        <taxon>Riboviria</taxon>
        <taxon>Orthornavirae</taxon>
        <taxon>Kitrinoviricota</taxon>
        <taxon>Alsuviricetes</taxon>
        <taxon>Martellivirales</taxon>
        <taxon>Togaviridae</taxon>
        <taxon>Alphavirus</taxon>
        <taxon>Alphavirus salmon subtype 1</taxon>
    </lineage>
</organism>
<comment type="function">
    <molecule>Polyprotein P1234</molecule>
    <text evidence="6">Inactive precursor of the viral replicase, which is activated by cleavages carried out by the viral protease nsP2.</text>
</comment>
<comment type="function">
    <molecule>Polyprotein P123</molecule>
    <text evidence="2">The early replication complex formed by the polyprotein P123 and nsP4 synthesizes minus-strand RNAs (By similarity). As soon P123 is cleaved into mature proteins, the plus-strand RNAs synthesis begins (By similarity).</text>
</comment>
<comment type="function">
    <molecule>Polyprotein P123</molecule>
    <text evidence="14">The early replication complex formed by the polyprotein P123 and nsP4 synthesizes minus-strand RNAs (Probable). Polyprotein P123 is a short-lived polyprotein that accumulates during early stage of infection (Probable). As soon P123 is cleaved into mature proteins, the plus-strand RNAs synthesis begins (Probable).</text>
</comment>
<comment type="function">
    <molecule>mRNA-capping enzyme nsP1</molecule>
    <text evidence="2 3 4 6 14">Cytoplasmic capping enzyme that catalyzes two virus-specific reactions: methyltransferase and nsP1 guanylyltransferase (By similarity). mRNA-capping is necessary since all viral RNAs are synthesized in the cytoplasm, and host capping enzymes are restricted to the nucleus (Probable). The enzymatic reaction involves a covalent link between 7-methyl-GMP and nsP1, whereas eukaryotic capping enzymes form a covalent complex only with GMP (Probable). nsP1 capping consists in the following reactions: GTP is first methylated into 7-methyl-GMP and then is covalently linked to nsP1 to form the m7GMp-nsP1 complex from which 7-methyl-GMP complex is transferred to the mRNA to create the cap structure (By similarity). NsP1 is also needed for the initiation of the minus-strand RNAs synthesis (By similarity). Probably serves as a membrane anchor for the replication complex composed of nsP1-nsP4 (By similarity). Palmitoylated nsP1 is remodeling host cell cytoskeleton, and induces filopodium-like structure formation at the surface of the host cell (By similarity).</text>
</comment>
<comment type="function">
    <molecule>Protease nsP2</molecule>
    <text evidence="2 3 6">Multifunctional protein whose N-terminus is part of the RNA polymerase complex and displays NTPase, RNA triphosphatase and helicase activities (By similarity). NTPase and RNA triphosphatase are involved in viral RNA capping and helicase keeps a check on the dsRNA replication intermediates (By similarity). The C-terminus harbors a protease that specifically cleaves the polyproteins and releases the mature proteins (By similarity). Required for the shutoff of minus-strand RNAs synthesis (By similarity). Specifically inhibits the host IFN response by promoting the nuclear export of host STAT1 (By similarity). Also inhibits host transcription by inducing the rapid proteasome-dependent degradation of POLR2A, a catalytic subunit of the RNAPII complex (By similarity). The resulting inhibition of cellular protein synthesis serves to ensure maximal viral gene expression and to evade host immune response (By similarity).</text>
</comment>
<comment type="function">
    <molecule>Non-structural protein 3</molecule>
    <text evidence="2 6">Seems to be essential for minus-strand RNAs and subgenomic 26S mRNAs synthesis (By similarity). Displays mono-ADP-ribosylhydrolase activity (By similarity). ADP-ribosylation is a post-translational modification that controls various processes of the host cell and the virus probably needs to revert it for optimal viral replication (By similarity). Binds proteins of G3BP family and sequesters them into the viral RNA replication complexes thereby inhibiting the formation of host stress granules on viral mRNAs (By similarity). The nsp3-G3BP complexes bind viral RNAs and probably orchestrate the assembly of viral replication complexes, thanks to the ability of G3BP family members to self-assemble and bind DNA (By similarity).</text>
</comment>
<comment type="function">
    <molecule>RNA-directed RNA polymerase nsP4</molecule>
    <text evidence="2">RNA dependent RNA polymerase (By similarity). Replicates genomic and antigenomic RNA by recognizing replications specific signals. The early replication complex formed by the polyprotein P123 and nsP4 synthesizes minus-strand RNAs (By similarity). The late replication complex composed of fully processed nsP1-nsP4 is responsible for the production of genomic and subgenomic plus-strand RNAs (By similarity).</text>
</comment>
<comment type="catalytic activity">
    <reaction evidence="4">
        <text>GTP + S-adenosyl-L-methionine = N(7)-methyl-GTP + S-adenosyl-L-homocysteine</text>
        <dbReference type="Rhea" id="RHEA:46948"/>
        <dbReference type="ChEBI" id="CHEBI:37565"/>
        <dbReference type="ChEBI" id="CHEBI:57856"/>
        <dbReference type="ChEBI" id="CHEBI:59789"/>
        <dbReference type="ChEBI" id="CHEBI:87133"/>
    </reaction>
</comment>
<comment type="catalytic activity">
    <reaction evidence="4">
        <text>N(7)-methyl-GTP + L-histidyl-[protein] = N(tele)-(N(7)-methylguanosine 5'-phospho)-L-histidyl-[protein] + diphosphate</text>
        <dbReference type="Rhea" id="RHEA:54792"/>
        <dbReference type="Rhea" id="RHEA-COMP:9745"/>
        <dbReference type="Rhea" id="RHEA-COMP:13995"/>
        <dbReference type="ChEBI" id="CHEBI:29979"/>
        <dbReference type="ChEBI" id="CHEBI:33019"/>
        <dbReference type="ChEBI" id="CHEBI:87133"/>
        <dbReference type="ChEBI" id="CHEBI:138334"/>
    </reaction>
    <physiologicalReaction direction="left-to-right" evidence="4">
        <dbReference type="Rhea" id="RHEA:54793"/>
    </physiologicalReaction>
</comment>
<comment type="catalytic activity">
    <reaction evidence="4">
        <text>N(tele)-(N(7)-methylguanosine 5'-phospho)-L-histidyl-[protein] + a 5'-end diphospho-(purine-ribonucleoside) in mRNA + H(+) = a 5'-end (N(7)-methyl 5'-triphosphoguanosine)-(purine-ribonucleoside) in mRNA + L-histidyl-[protein]</text>
        <dbReference type="Rhea" id="RHEA:54800"/>
        <dbReference type="Rhea" id="RHEA-COMP:9745"/>
        <dbReference type="Rhea" id="RHEA-COMP:12925"/>
        <dbReference type="Rhea" id="RHEA-COMP:13929"/>
        <dbReference type="Rhea" id="RHEA-COMP:13995"/>
        <dbReference type="ChEBI" id="CHEBI:15378"/>
        <dbReference type="ChEBI" id="CHEBI:29979"/>
        <dbReference type="ChEBI" id="CHEBI:133968"/>
        <dbReference type="ChEBI" id="CHEBI:138276"/>
        <dbReference type="ChEBI" id="CHEBI:138334"/>
    </reaction>
</comment>
<comment type="catalytic activity">
    <reaction evidence="3">
        <text>a 5'-end triphospho-ribonucleoside in mRNA + H2O = a 5'-end diphospho-ribonucleoside in mRNA + phosphate + H(+)</text>
        <dbReference type="Rhea" id="RHEA:67004"/>
        <dbReference type="Rhea" id="RHEA-COMP:17164"/>
        <dbReference type="Rhea" id="RHEA-COMP:17165"/>
        <dbReference type="ChEBI" id="CHEBI:15377"/>
        <dbReference type="ChEBI" id="CHEBI:15378"/>
        <dbReference type="ChEBI" id="CHEBI:43474"/>
        <dbReference type="ChEBI" id="CHEBI:167616"/>
        <dbReference type="ChEBI" id="CHEBI:167618"/>
        <dbReference type="EC" id="3.6.1.74"/>
    </reaction>
    <physiologicalReaction direction="left-to-right" evidence="3">
        <dbReference type="Rhea" id="RHEA:67005"/>
    </physiologicalReaction>
</comment>
<comment type="catalytic activity">
    <reaction evidence="6">
        <text>a ribonucleoside 5'-triphosphate + H2O = a ribonucleoside 5'-diphosphate + phosphate + H(+)</text>
        <dbReference type="Rhea" id="RHEA:23680"/>
        <dbReference type="ChEBI" id="CHEBI:15377"/>
        <dbReference type="ChEBI" id="CHEBI:15378"/>
        <dbReference type="ChEBI" id="CHEBI:43474"/>
        <dbReference type="ChEBI" id="CHEBI:57930"/>
        <dbReference type="ChEBI" id="CHEBI:61557"/>
        <dbReference type="EC" id="3.6.1.15"/>
    </reaction>
</comment>
<comment type="catalytic activity">
    <reaction evidence="6">
        <text>ATP + H2O = ADP + phosphate + H(+)</text>
        <dbReference type="Rhea" id="RHEA:13065"/>
        <dbReference type="ChEBI" id="CHEBI:15377"/>
        <dbReference type="ChEBI" id="CHEBI:15378"/>
        <dbReference type="ChEBI" id="CHEBI:30616"/>
        <dbReference type="ChEBI" id="CHEBI:43474"/>
        <dbReference type="ChEBI" id="CHEBI:456216"/>
        <dbReference type="EC" id="3.6.4.13"/>
    </reaction>
</comment>
<comment type="catalytic activity">
    <reaction evidence="8">
        <text>RNA(n) + a ribonucleoside 5'-triphosphate = RNA(n+1) + diphosphate</text>
        <dbReference type="Rhea" id="RHEA:21248"/>
        <dbReference type="Rhea" id="RHEA-COMP:14527"/>
        <dbReference type="Rhea" id="RHEA-COMP:17342"/>
        <dbReference type="ChEBI" id="CHEBI:33019"/>
        <dbReference type="ChEBI" id="CHEBI:61557"/>
        <dbReference type="ChEBI" id="CHEBI:140395"/>
        <dbReference type="EC" id="2.7.7.48"/>
    </reaction>
</comment>
<comment type="catalytic activity">
    <reaction evidence="6">
        <text>4-O-(ADP-D-ribosyl)-L-aspartyl-[protein] + H2O = L-aspartyl-[protein] + ADP-D-ribose + H(+)</text>
        <dbReference type="Rhea" id="RHEA:54428"/>
        <dbReference type="Rhea" id="RHEA-COMP:9867"/>
        <dbReference type="Rhea" id="RHEA-COMP:13832"/>
        <dbReference type="ChEBI" id="CHEBI:15377"/>
        <dbReference type="ChEBI" id="CHEBI:15378"/>
        <dbReference type="ChEBI" id="CHEBI:29961"/>
        <dbReference type="ChEBI" id="CHEBI:57967"/>
        <dbReference type="ChEBI" id="CHEBI:138102"/>
    </reaction>
    <physiologicalReaction direction="left-to-right" evidence="6">
        <dbReference type="Rhea" id="RHEA:54429"/>
    </physiologicalReaction>
</comment>
<comment type="catalytic activity">
    <reaction evidence="6">
        <text>5-O-(ADP-D-ribosyl)-L-glutamyl-[protein] + H2O = L-glutamyl-[protein] + ADP-D-ribose + H(+)</text>
        <dbReference type="Rhea" id="RHEA:58248"/>
        <dbReference type="Rhea" id="RHEA-COMP:10208"/>
        <dbReference type="Rhea" id="RHEA-COMP:15089"/>
        <dbReference type="ChEBI" id="CHEBI:15377"/>
        <dbReference type="ChEBI" id="CHEBI:15378"/>
        <dbReference type="ChEBI" id="CHEBI:29973"/>
        <dbReference type="ChEBI" id="CHEBI:57967"/>
        <dbReference type="ChEBI" id="CHEBI:142540"/>
    </reaction>
    <physiologicalReaction direction="left-to-right" evidence="6">
        <dbReference type="Rhea" id="RHEA:58249"/>
    </physiologicalReaction>
</comment>
<comment type="catalytic activity">
    <reaction evidence="2">
        <text>RNA(n) + ATP = RNA(n)-3'-adenine ribonucleotide + diphosphate</text>
        <dbReference type="Rhea" id="RHEA:11332"/>
        <dbReference type="Rhea" id="RHEA-COMP:14527"/>
        <dbReference type="Rhea" id="RHEA-COMP:17347"/>
        <dbReference type="ChEBI" id="CHEBI:30616"/>
        <dbReference type="ChEBI" id="CHEBI:33019"/>
        <dbReference type="ChEBI" id="CHEBI:140395"/>
        <dbReference type="ChEBI" id="CHEBI:173115"/>
        <dbReference type="EC" id="2.7.7.19"/>
    </reaction>
</comment>
<comment type="catalytic activity">
    <reaction evidence="6">
        <text>ADP-alpha-D-ribose 1''-phosphate + H2O = ADP-D-ribose + phosphate</text>
        <dbReference type="Rhea" id="RHEA:25029"/>
        <dbReference type="ChEBI" id="CHEBI:15377"/>
        <dbReference type="ChEBI" id="CHEBI:43474"/>
        <dbReference type="ChEBI" id="CHEBI:57967"/>
        <dbReference type="ChEBI" id="CHEBI:58753"/>
        <dbReference type="EC" id="3.1.3.84"/>
    </reaction>
    <physiologicalReaction direction="left-to-right" evidence="6">
        <dbReference type="Rhea" id="RHEA:25030"/>
    </physiologicalReaction>
</comment>
<comment type="cofactor">
    <cofactor evidence="2">
        <name>Mg(2+)</name>
        <dbReference type="ChEBI" id="CHEBI:18420"/>
    </cofactor>
    <cofactor evidence="2">
        <name>Mn(2+)</name>
        <dbReference type="ChEBI" id="CHEBI:29035"/>
    </cofactor>
    <text evidence="2">For nsP4 adenylyltransferase activity; Mn(2+) supports catalysis at 60% of the levels observed with Mg(2+).</text>
</comment>
<comment type="cofactor">
    <cofactor>
        <name>Mg(2+)</name>
        <dbReference type="ChEBI" id="CHEBI:18420"/>
    </cofactor>
    <text evidence="2">For nsP4 RNA-directed RNA polymerase activity.</text>
</comment>
<comment type="cofactor">
    <cofactor evidence="4">
        <name>Mg(2+)</name>
        <dbReference type="ChEBI" id="CHEBI:18420"/>
    </cofactor>
    <text evidence="4">For nsP1 guanylylation.</text>
</comment>
<comment type="cofactor">
    <cofactor>
        <name>Mg(2+)</name>
        <dbReference type="ChEBI" id="CHEBI:18420"/>
    </cofactor>
    <text evidence="6">For nsP2 RNA triphosphatase activity.</text>
</comment>
<comment type="cofactor">
    <cofactor>
        <name>Mg(2+)</name>
        <dbReference type="ChEBI" id="CHEBI:18420"/>
    </cofactor>
    <text evidence="6">For nsP2 NTPase activity.</text>
</comment>
<comment type="subunit">
    <molecule>mRNA-capping enzyme nsP1</molecule>
    <text evidence="4 6">Interacts with non-structural protein 3 (By similarity). Interacts with RNA-directed RNA polymerase nsP4 (By similarity). Interacts with protease nsP2 (By similarity). interacts with itself (By similarity).</text>
</comment>
<comment type="subunit">
    <molecule>Non-structural protein 3</molecule>
    <text evidence="4 6">Interacts with mRNA-capping enzyme nsP1 (By similarity). Interacts with host DDX1 (By similarity). Interacts with host DDX3 (By similarity).</text>
</comment>
<comment type="subunit">
    <molecule>RNA-directed RNA polymerase nsP4</molecule>
    <text evidence="4 6">Interacts with mRNA-capping enzyme nsP1 (By similarity). Interacts with protease nsP2 (By similarity). Interacts with itself (By similarity).</text>
</comment>
<comment type="subunit">
    <molecule>Protease nsP2</molecule>
    <text evidence="4 6">Interacts with RNA-directed RNA polymerase nsP4 (By similarity). Interacts with mRNA-capping enzyme nsP1 (By similarity). Interacts with KPNA1/karyopherin-alpha1; this interaction probably allows the active transport of protease nsP2 into the host nucleus (By similarity).</text>
</comment>
<comment type="subcellular location">
    <molecule>Polyprotein P1234</molecule>
    <subcellularLocation>
        <location evidence="14">Host cytoplasmic vesicle membrane</location>
        <topology evidence="14">Peripheral membrane protein</topology>
    </subcellularLocation>
    <text evidence="14">Part of cytoplasmic vesicles, which are probably formed at the plasma membrane and internalized leading to late endosomal/lysosomal spherules containing the replication complex.</text>
</comment>
<comment type="subcellular location">
    <molecule>Polyprotein P123</molecule>
    <subcellularLocation>
        <location evidence="14">Host cytoplasmic vesicle membrane</location>
        <topology evidence="14">Peripheral membrane protein</topology>
    </subcellularLocation>
    <text evidence="14">Part of cytoplasmic vesicles, which are probably formed at the plasma membrane and internalized leading to late endosomal/lysosomal spherules containing the replication complex.</text>
</comment>
<comment type="subcellular location">
    <molecule>mRNA-capping enzyme nsP1</molecule>
    <subcellularLocation>
        <location evidence="3">Host cytoplasmic vesicle membrane</location>
        <topology evidence="3">Lipid-anchor</topology>
    </subcellularLocation>
    <subcellularLocation>
        <location evidence="3">Host cell membrane</location>
        <topology evidence="3">Lipid-anchor</topology>
        <orientation evidence="3">Cytoplasmic side</orientation>
    </subcellularLocation>
    <subcellularLocation>
        <location evidence="6">Host cell projection</location>
        <location evidence="6">Host filopodium</location>
    </subcellularLocation>
    <text evidence="3 6">In the late phase of infection, the polyprotein is quickly cleaved before localization to cellular membranes. Then a fraction of nsP1 localizes to the inner surface of the plasma membrane and its filopodial extensions. Only the palmitoylated nsP1 localizes to the host filopodia (By similarity). NsP1 is also part of cytoplasmic vesicles, which are probably formed at the plasma membrane and internalized leading to late endosomal/lysosomal spherules containing the replication complex (By similarity).</text>
</comment>
<comment type="subcellular location">
    <molecule>Protease nsP2</molecule>
    <subcellularLocation>
        <location evidence="3">Host cytoplasmic vesicle membrane</location>
        <topology evidence="3">Peripheral membrane protein</topology>
    </subcellularLocation>
    <subcellularLocation>
        <location evidence="4">Host nucleus</location>
    </subcellularLocation>
    <subcellularLocation>
        <location evidence="4">Host cytoplasm</location>
    </subcellularLocation>
    <text evidence="3 4">In the late phase of infection, the polyprotein is quickly cleaved before localization to cellular membranes. Then approximately half of nsP2 is found in the nucleus (By similarity). Shuttles between cytoplasm and nucleus (By similarity). NsP2 is also part of cytoplasmic vesicles, which are probably formed at the plasma membrane and internalized leading to late endosomal/lysosomal spherules containing the replication complex (By similarity).</text>
</comment>
<comment type="subcellular location">
    <molecule>Non-structural protein 3</molecule>
    <subcellularLocation>
        <location evidence="2">Host cytoplasmic vesicle membrane</location>
        <topology evidence="14">Peripheral membrane protein</topology>
    </subcellularLocation>
    <text evidence="2">In the late phase of infection, the polyprotein is quickly cleaved before localization to cellular membranes. Then nsP3 forms aggregates in cytoplasm (By similarity). NsP3 is also part of cytoplasmic vesicles, which are probably formed at the plasma membrane and internalized leading to late endosomal/lysosomal spherules containing the replication complex (By similarity).</text>
</comment>
<comment type="subcellular location">
    <molecule>RNA-directed RNA polymerase nsP4</molecule>
    <subcellularLocation>
        <location>Host cytoplasmic vesicle membrane</location>
        <topology evidence="3">Peripheral membrane protein</topology>
    </subcellularLocation>
    <text evidence="3">NsP4 is part of cytoplasmic vesicles, which are probably formed at the plasma membrane and internalized leading to late endosomal/lysosomal spherules containing the replication complex.</text>
</comment>
<comment type="domain">
    <molecule>Protease nsP2</molecule>
    <text evidence="4 6">The N-terminus exhibits NTPase and RNA triphosphatase activities and is proposed to have helicase activity, whereas the C-terminus possesses protease activity (By similarity). Contains a nuclear localization signal and a nuclear export signal, these two motifs are probably involved in the shuttling between the cytoplasm and the nucleus of nsP2 (By similarity). The C-terminus is required for promoting the export of host STAT1 (By similarity).</text>
</comment>
<comment type="domain">
    <molecule>Non-structural protein 3</molecule>
    <text evidence="2 6">In the N-terminus, the macro domain displays a mono-ADP-ribosylhydrolase activity (By similarity). The central part has a zinc-binding function (By similarity).</text>
</comment>
<comment type="PTM">
    <molecule>Polyprotein P1234</molecule>
    <text evidence="2">Specific enzymatic cleavages in vivo yield mature proteins (By similarity). The processing of the polyprotein is temporally regulated (By similarity). In early stages (1.7 hpi), P1234 is first cleaved in trans through its nsP2 protease activity, releasing P123 and nsP4, which associate to form the early replication complex (By similarity). At the same time, P1234 is also cut at the nsP1/nsP2 site early in infection but with lower efficiency (By similarity). After replication of the viral minus-strand RNAs (4 hpi), the polyproteins are cut at the nsP1/nsP2 and nsP2/nsP3 sites very efficiently, preventing accumulation of P123 and P1234 and allowing the formation of the late replication complex (By similarity). NsP3/nsP4 site is not cleaved anymore and P34 is produced rather than nsP4 (By similarity).</text>
</comment>
<comment type="PTM">
    <molecule>Polyprotein P123</molecule>
    <text evidence="2">Specific enzymatic cleavages in vivo yield mature proteins (By similarity). The processing of the polyprotein is temporally regulated (By similarity). In early stages (1.7 hpi), P123 is cleaved at the nsP1/nsP2 site with low efficiency (By similarity). After replication of the viral minus-strand RNAs (4 hpi), the polyproteins are cut at the nsP1/nsP2 and nsP2/nsP3 sites very efficiently, preventing accumulation of P123 and allowing the formation of the late replication complex (By similarity).</text>
</comment>
<comment type="PTM">
    <molecule>mRNA-capping enzyme nsP1</molecule>
    <text evidence="6">Palmitoylated by host palmitoyltransferases ZDHHC2 and ZDHHC19.</text>
</comment>
<comment type="PTM">
    <molecule>Non-structural protein 3</molecule>
    <text evidence="3">Phosphorylated by host on serines and threonines.</text>
</comment>
<comment type="PTM">
    <molecule>RNA-directed RNA polymerase nsP4</molecule>
    <text evidence="2">Ubiquitinated; targets the protein for rapid degradation via the ubiquitin system (By similarity). Nsp4 is present in extremely low quantities due to low frequency of translation through the amber stop-codon and the degradation by the ubiquitin pathway (By similarity).</text>
</comment>
<comment type="miscellaneous">
    <text evidence="2">Viral replication produces dsRNA in the late phase of infection, resulting in a strong activation of host EIF2AK2/PKR, leading to almost complete phosphorylation of EIF2A (By similarity). This inactivates completely cellular translation initiation, resulting shutoff of host proteins synthesis (By similarity). However, phosphorylation of EIF2A is probably not the only mechanism responsible for the host translation shutoff (By similarity). The viral translation can still occur normally because it relies on a hairpin structure in the coding region of sgRNA and is EIF2A-, EIF2D-, EIF4G- EIF4A-independent (By similarity).</text>
</comment>
<comment type="caution">
    <text evidence="1 13">There is no stop codon readthrough before nsP4 (PubMed:12021349). The opal termination codon has probably been mutated to a sense codon on passage in cell culture (By similarity). The presence of the opal codon may be a requirement for viral maintenance in both vertebrate and invertebrate hosts and a selective advantage may be conferred in cell culture for the sense codon (By similarity).</text>
</comment>
<reference key="1">
    <citation type="journal article" date="2002" name="J. Virol.">
        <title>Comparison of two aquatic alphaviruses, Salmon pancreas disease virus and Sleeping disease virus, by using genome sequence analysis, monoclonal reactivity and cross-infection.</title>
        <authorList>
            <person name="Weston J.H."/>
            <person name="Villoing S."/>
            <person name="Bremont M."/>
            <person name="Castric J."/>
            <person name="Pfeffer M."/>
            <person name="Jewhurst V."/>
            <person name="McLoughlin M."/>
            <person name="Rodseth O."/>
            <person name="Christie K.E."/>
            <person name="Koumans J."/>
            <person name="Todd D."/>
        </authorList>
    </citation>
    <scope>NUCLEOTIDE SEQUENCE [GENOMIC RNA]</scope>
</reference>
<organismHost>
    <name type="scientific">Oncorhynchus mykiss</name>
    <name type="common">Rainbow trout</name>
    <name type="synonym">Salmo gairdneri</name>
    <dbReference type="NCBI Taxonomy" id="8022"/>
</organismHost>
<organismHost>
    <name type="scientific">Salmo salar</name>
    <name type="common">Atlantic salmon</name>
    <dbReference type="NCBI Taxonomy" id="8030"/>
</organismHost>